<comment type="function">
    <text evidence="1">Binds directly to 23S ribosomal RNA and is necessary for the in vitro assembly process of the 50S ribosomal subunit. It is not involved in the protein synthesizing functions of that subunit.</text>
</comment>
<comment type="similarity">
    <text evidence="1">Belongs to the bacterial ribosomal protein bL20 family.</text>
</comment>
<protein>
    <recommendedName>
        <fullName evidence="1">Large ribosomal subunit protein bL20</fullName>
    </recommendedName>
    <alternativeName>
        <fullName evidence="2">50S ribosomal protein L20</fullName>
    </alternativeName>
</protein>
<sequence>MARVKRAVNAHKKRRVILERAAGYRGQRSRLYRKAKEQVTHSLVYAYRDRRAKKGEFRRLWIQRINAAARANGLTYNRLIQGLSLAGVQVDRRILAELAVHEPATFASLVQTAKTALPANTSAPKVAANA</sequence>
<gene>
    <name evidence="1" type="primary">rplT</name>
    <name type="ordered locus">CMS1223</name>
</gene>
<accession>B0RHC2</accession>
<name>RL20_CLASE</name>
<proteinExistence type="inferred from homology"/>
<reference key="1">
    <citation type="journal article" date="2008" name="J. Bacteriol.">
        <title>Genome of the actinomycete plant pathogen Clavibacter michiganensis subsp. sepedonicus suggests recent niche adaptation.</title>
        <authorList>
            <person name="Bentley S.D."/>
            <person name="Corton C."/>
            <person name="Brown S.E."/>
            <person name="Barron A."/>
            <person name="Clark L."/>
            <person name="Doggett J."/>
            <person name="Harris B."/>
            <person name="Ormond D."/>
            <person name="Quail M.A."/>
            <person name="May G."/>
            <person name="Francis D."/>
            <person name="Knudson D."/>
            <person name="Parkhill J."/>
            <person name="Ishimaru C.A."/>
        </authorList>
    </citation>
    <scope>NUCLEOTIDE SEQUENCE [LARGE SCALE GENOMIC DNA]</scope>
    <source>
        <strain>ATCC 33113 / DSM 20744 / JCM 9667 / LMG 2889 / ICMP 2535 / C-1</strain>
    </source>
</reference>
<keyword id="KW-0687">Ribonucleoprotein</keyword>
<keyword id="KW-0689">Ribosomal protein</keyword>
<keyword id="KW-0694">RNA-binding</keyword>
<keyword id="KW-0699">rRNA-binding</keyword>
<feature type="chain" id="PRO_1000080063" description="Large ribosomal subunit protein bL20">
    <location>
        <begin position="1"/>
        <end position="130"/>
    </location>
</feature>
<organism>
    <name type="scientific">Clavibacter sepedonicus</name>
    <name type="common">Clavibacter michiganensis subsp. sepedonicus</name>
    <dbReference type="NCBI Taxonomy" id="31964"/>
    <lineage>
        <taxon>Bacteria</taxon>
        <taxon>Bacillati</taxon>
        <taxon>Actinomycetota</taxon>
        <taxon>Actinomycetes</taxon>
        <taxon>Micrococcales</taxon>
        <taxon>Microbacteriaceae</taxon>
        <taxon>Clavibacter</taxon>
    </lineage>
</organism>
<evidence type="ECO:0000255" key="1">
    <source>
        <dbReference type="HAMAP-Rule" id="MF_00382"/>
    </source>
</evidence>
<evidence type="ECO:0000305" key="2"/>
<dbReference type="EMBL" id="AM849034">
    <property type="protein sequence ID" value="CAQ01339.1"/>
    <property type="molecule type" value="Genomic_DNA"/>
</dbReference>
<dbReference type="RefSeq" id="WP_012298617.1">
    <property type="nucleotide sequence ID" value="NZ_MZMN01000003.1"/>
</dbReference>
<dbReference type="SMR" id="B0RHC2"/>
<dbReference type="STRING" id="31964.CMS1223"/>
<dbReference type="KEGG" id="cms:CMS1223"/>
<dbReference type="eggNOG" id="COG0292">
    <property type="taxonomic scope" value="Bacteria"/>
</dbReference>
<dbReference type="HOGENOM" id="CLU_123265_0_0_11"/>
<dbReference type="OrthoDB" id="9808966at2"/>
<dbReference type="Proteomes" id="UP000001318">
    <property type="component" value="Chromosome"/>
</dbReference>
<dbReference type="GO" id="GO:1990904">
    <property type="term" value="C:ribonucleoprotein complex"/>
    <property type="evidence" value="ECO:0007669"/>
    <property type="project" value="UniProtKB-KW"/>
</dbReference>
<dbReference type="GO" id="GO:0005840">
    <property type="term" value="C:ribosome"/>
    <property type="evidence" value="ECO:0007669"/>
    <property type="project" value="UniProtKB-KW"/>
</dbReference>
<dbReference type="GO" id="GO:0019843">
    <property type="term" value="F:rRNA binding"/>
    <property type="evidence" value="ECO:0007669"/>
    <property type="project" value="UniProtKB-UniRule"/>
</dbReference>
<dbReference type="GO" id="GO:0003735">
    <property type="term" value="F:structural constituent of ribosome"/>
    <property type="evidence" value="ECO:0007669"/>
    <property type="project" value="InterPro"/>
</dbReference>
<dbReference type="GO" id="GO:0000027">
    <property type="term" value="P:ribosomal large subunit assembly"/>
    <property type="evidence" value="ECO:0007669"/>
    <property type="project" value="UniProtKB-UniRule"/>
</dbReference>
<dbReference type="GO" id="GO:0006412">
    <property type="term" value="P:translation"/>
    <property type="evidence" value="ECO:0007669"/>
    <property type="project" value="InterPro"/>
</dbReference>
<dbReference type="CDD" id="cd07026">
    <property type="entry name" value="Ribosomal_L20"/>
    <property type="match status" value="1"/>
</dbReference>
<dbReference type="FunFam" id="1.10.1900.20:FF:000001">
    <property type="entry name" value="50S ribosomal protein L20"/>
    <property type="match status" value="1"/>
</dbReference>
<dbReference type="Gene3D" id="6.10.160.10">
    <property type="match status" value="1"/>
</dbReference>
<dbReference type="Gene3D" id="1.10.1900.20">
    <property type="entry name" value="Ribosomal protein L20"/>
    <property type="match status" value="1"/>
</dbReference>
<dbReference type="HAMAP" id="MF_00382">
    <property type="entry name" value="Ribosomal_bL20"/>
    <property type="match status" value="1"/>
</dbReference>
<dbReference type="InterPro" id="IPR005813">
    <property type="entry name" value="Ribosomal_bL20"/>
</dbReference>
<dbReference type="InterPro" id="IPR049946">
    <property type="entry name" value="RIBOSOMAL_L20_CS"/>
</dbReference>
<dbReference type="InterPro" id="IPR035566">
    <property type="entry name" value="Ribosomal_protein_bL20_C"/>
</dbReference>
<dbReference type="NCBIfam" id="TIGR01032">
    <property type="entry name" value="rplT_bact"/>
    <property type="match status" value="1"/>
</dbReference>
<dbReference type="PANTHER" id="PTHR10986">
    <property type="entry name" value="39S RIBOSOMAL PROTEIN L20"/>
    <property type="match status" value="1"/>
</dbReference>
<dbReference type="Pfam" id="PF00453">
    <property type="entry name" value="Ribosomal_L20"/>
    <property type="match status" value="1"/>
</dbReference>
<dbReference type="PRINTS" id="PR00062">
    <property type="entry name" value="RIBOSOMALL20"/>
</dbReference>
<dbReference type="SUPFAM" id="SSF74731">
    <property type="entry name" value="Ribosomal protein L20"/>
    <property type="match status" value="1"/>
</dbReference>
<dbReference type="PROSITE" id="PS00937">
    <property type="entry name" value="RIBOSOMAL_L20"/>
    <property type="match status" value="1"/>
</dbReference>